<reference key="1">
    <citation type="journal article" date="2004" name="Science">
        <title>The 1.2-megabase genome sequence of Mimivirus.</title>
        <authorList>
            <person name="Raoult D."/>
            <person name="Audic S."/>
            <person name="Robert C."/>
            <person name="Abergel C."/>
            <person name="Renesto P."/>
            <person name="Ogata H."/>
            <person name="La Scola B."/>
            <person name="Susan M."/>
            <person name="Claverie J.-M."/>
        </authorList>
    </citation>
    <scope>NUCLEOTIDE SEQUENCE [LARGE SCALE GENOMIC DNA]</scope>
    <source>
        <strain>Rowbotham-Bradford</strain>
    </source>
</reference>
<accession>Q5UP69</accession>
<dbReference type="EMBL" id="AY653733">
    <property type="protein sequence ID" value="AAV50870.1"/>
    <property type="molecule type" value="Genomic_DNA"/>
</dbReference>
<dbReference type="SMR" id="Q5UP69"/>
<dbReference type="KEGG" id="vg:9925245"/>
<dbReference type="OrthoDB" id="19723at10239"/>
<dbReference type="Proteomes" id="UP000001134">
    <property type="component" value="Genome"/>
</dbReference>
<gene>
    <name type="ordered locus">MIMI_R607</name>
</gene>
<proteinExistence type="predicted"/>
<sequence>MSTDKNILLYAIANNFKETLGLKVCKSTKGYISEYSESYSELSNNDKMYYTKYAIAIINCLSKYLEEQFEQKMCMFKMNDEDSEVTHDFRIVCDDEEVIHLSMDYKKIGVNPIIPDRLMKLCGYNKNTNMYKEYTKNYNNICKNIYKKIGSYDKYSELSDKQREKIIYRPMNELLINTIGGKKKCTEKLYEHVFPEGVNANRIVIKWHKNRFIVYDFRTQVDEIKSFKLSPFKSKSKQPEDDVRILYLTFKNGSKLEPQFILTLNTNSTDINEHISLKYTIKLDNIDELFKIGGSSIQ</sequence>
<protein>
    <recommendedName>
        <fullName>Uncharacterized protein R607</fullName>
    </recommendedName>
</protein>
<organism>
    <name type="scientific">Acanthamoeba polyphaga mimivirus</name>
    <name type="common">APMV</name>
    <dbReference type="NCBI Taxonomy" id="212035"/>
    <lineage>
        <taxon>Viruses</taxon>
        <taxon>Varidnaviria</taxon>
        <taxon>Bamfordvirae</taxon>
        <taxon>Nucleocytoviricota</taxon>
        <taxon>Megaviricetes</taxon>
        <taxon>Imitervirales</taxon>
        <taxon>Mimiviridae</taxon>
        <taxon>Megamimivirinae</taxon>
        <taxon>Mimivirus</taxon>
        <taxon>Mimivirus bradfordmassiliense</taxon>
    </lineage>
</organism>
<organismHost>
    <name type="scientific">Acanthamoeba polyphaga</name>
    <name type="common">Amoeba</name>
    <dbReference type="NCBI Taxonomy" id="5757"/>
</organismHost>
<name>YR607_MIMIV</name>
<keyword id="KW-1185">Reference proteome</keyword>
<feature type="chain" id="PRO_0000247372" description="Uncharacterized protein R607">
    <location>
        <begin position="1"/>
        <end position="298"/>
    </location>
</feature>